<comment type="function">
    <text evidence="1">This protein is one of the repressors that regulate the expression of deoCABD genes, which encode nucleotide and deoxy ribonucleotide catabolizing enzymes. It also negatively regulates the expression of nupG (a transport protein) and tsx (a pore-forming protein). The inducer is deoxyribose-5-phosphate (By similarity).</text>
</comment>
<comment type="subunit">
    <text evidence="1">Homooctamer.</text>
</comment>
<dbReference type="EMBL" id="AE005174">
    <property type="protein sequence ID" value="AAG55216.1"/>
    <property type="molecule type" value="Genomic_DNA"/>
</dbReference>
<dbReference type="EMBL" id="BA000007">
    <property type="protein sequence ID" value="BAB34343.1"/>
    <property type="molecule type" value="Genomic_DNA"/>
</dbReference>
<dbReference type="PIR" id="D85594">
    <property type="entry name" value="D85594"/>
</dbReference>
<dbReference type="PIR" id="H90743">
    <property type="entry name" value="H90743"/>
</dbReference>
<dbReference type="RefSeq" id="NP_308947.1">
    <property type="nucleotide sequence ID" value="NC_002695.1"/>
</dbReference>
<dbReference type="RefSeq" id="WP_000450121.1">
    <property type="nucleotide sequence ID" value="NZ_VOAI01000006.1"/>
</dbReference>
<dbReference type="SMR" id="P0ACK7"/>
<dbReference type="STRING" id="155864.Z1067"/>
<dbReference type="GeneID" id="75170909"/>
<dbReference type="GeneID" id="917661"/>
<dbReference type="KEGG" id="ece:Z1067"/>
<dbReference type="KEGG" id="ecs:ECs_0920"/>
<dbReference type="PATRIC" id="fig|386585.9.peg.1036"/>
<dbReference type="eggNOG" id="COG1349">
    <property type="taxonomic scope" value="Bacteria"/>
</dbReference>
<dbReference type="HOGENOM" id="CLU_060699_4_0_6"/>
<dbReference type="OMA" id="CFHFHEV"/>
<dbReference type="Proteomes" id="UP000000558">
    <property type="component" value="Chromosome"/>
</dbReference>
<dbReference type="Proteomes" id="UP000002519">
    <property type="component" value="Chromosome"/>
</dbReference>
<dbReference type="GO" id="GO:0003677">
    <property type="term" value="F:DNA binding"/>
    <property type="evidence" value="ECO:0007669"/>
    <property type="project" value="UniProtKB-KW"/>
</dbReference>
<dbReference type="GO" id="GO:0003700">
    <property type="term" value="F:DNA-binding transcription factor activity"/>
    <property type="evidence" value="ECO:0007669"/>
    <property type="project" value="InterPro"/>
</dbReference>
<dbReference type="FunFam" id="3.40.50.1360:FF:000011">
    <property type="entry name" value="Deoxyribose operon repressor"/>
    <property type="match status" value="1"/>
</dbReference>
<dbReference type="Gene3D" id="3.40.50.1360">
    <property type="match status" value="1"/>
</dbReference>
<dbReference type="InterPro" id="IPR050313">
    <property type="entry name" value="Carb_Metab_HTH_regulators"/>
</dbReference>
<dbReference type="InterPro" id="IPR014036">
    <property type="entry name" value="DeoR-like_C"/>
</dbReference>
<dbReference type="InterPro" id="IPR001034">
    <property type="entry name" value="DeoR_HTH"/>
</dbReference>
<dbReference type="InterPro" id="IPR037171">
    <property type="entry name" value="NagB/RpiA_transferase-like"/>
</dbReference>
<dbReference type="InterPro" id="IPR018356">
    <property type="entry name" value="Tscrpt_reg_HTH_DeoR_CS"/>
</dbReference>
<dbReference type="NCBIfam" id="NF007961">
    <property type="entry name" value="PRK10681.1"/>
    <property type="match status" value="1"/>
</dbReference>
<dbReference type="PANTHER" id="PTHR30363:SF8">
    <property type="entry name" value="DEOXYRIBOSE OPERON REPRESSOR"/>
    <property type="match status" value="1"/>
</dbReference>
<dbReference type="PANTHER" id="PTHR30363">
    <property type="entry name" value="HTH-TYPE TRANSCRIPTIONAL REGULATOR SRLR-RELATED"/>
    <property type="match status" value="1"/>
</dbReference>
<dbReference type="Pfam" id="PF00455">
    <property type="entry name" value="DeoRC"/>
    <property type="match status" value="1"/>
</dbReference>
<dbReference type="Pfam" id="PF08220">
    <property type="entry name" value="HTH_DeoR"/>
    <property type="match status" value="1"/>
</dbReference>
<dbReference type="SMART" id="SM01134">
    <property type="entry name" value="DeoRC"/>
    <property type="match status" value="1"/>
</dbReference>
<dbReference type="SMART" id="SM00420">
    <property type="entry name" value="HTH_DEOR"/>
    <property type="match status" value="1"/>
</dbReference>
<dbReference type="SUPFAM" id="SSF100950">
    <property type="entry name" value="NagB/RpiA/CoA transferase-like"/>
    <property type="match status" value="1"/>
</dbReference>
<dbReference type="PROSITE" id="PS00894">
    <property type="entry name" value="HTH_DEOR_1"/>
    <property type="match status" value="1"/>
</dbReference>
<dbReference type="PROSITE" id="PS51000">
    <property type="entry name" value="HTH_DEOR_2"/>
    <property type="match status" value="1"/>
</dbReference>
<sequence length="252" mass="28548">METRREERIGQLLQELKRSDKLHLKDAAALLGVSEMTIRRDLNNHSAPVVLLGGYIVLEPRSASHYLLSDQKSRLVEEKRRAAKLAATLVEPDQTLFFDCGTTTPWIIEAIDNEIPFTAVCYSLNTFLALKEKPHCRAFLCGGEFHASNAIFKPIDFQQTLNNFCPDIAFYSAAGVHVSKGATCFNLEELPVKHWAMSMAQKHVLVVDHSKFGKVRPARMGDLKRFDIVVSDCCPEDEYVKYAQTQRIKLMY</sequence>
<evidence type="ECO:0000250" key="1"/>
<evidence type="ECO:0000255" key="2">
    <source>
        <dbReference type="PROSITE-ProRule" id="PRU00349"/>
    </source>
</evidence>
<feature type="chain" id="PRO_0000050245" description="Deoxyribose operon repressor">
    <location>
        <begin position="1"/>
        <end position="252"/>
    </location>
</feature>
<feature type="domain" description="HTH deoR-type" evidence="2">
    <location>
        <begin position="5"/>
        <end position="57"/>
    </location>
</feature>
<feature type="DNA-binding region" description="H-T-H motif" evidence="2">
    <location>
        <begin position="22"/>
        <end position="41"/>
    </location>
</feature>
<gene>
    <name type="primary">deoR</name>
    <name type="ordered locus">Z1067</name>
    <name type="ordered locus">ECs0920</name>
</gene>
<proteinExistence type="inferred from homology"/>
<protein>
    <recommendedName>
        <fullName>Deoxyribose operon repressor</fullName>
    </recommendedName>
</protein>
<name>DEOR_ECO57</name>
<organism>
    <name type="scientific">Escherichia coli O157:H7</name>
    <dbReference type="NCBI Taxonomy" id="83334"/>
    <lineage>
        <taxon>Bacteria</taxon>
        <taxon>Pseudomonadati</taxon>
        <taxon>Pseudomonadota</taxon>
        <taxon>Gammaproteobacteria</taxon>
        <taxon>Enterobacterales</taxon>
        <taxon>Enterobacteriaceae</taxon>
        <taxon>Escherichia</taxon>
    </lineage>
</organism>
<keyword id="KW-0238">DNA-binding</keyword>
<keyword id="KW-1185">Reference proteome</keyword>
<keyword id="KW-0678">Repressor</keyword>
<keyword id="KW-0804">Transcription</keyword>
<keyword id="KW-0805">Transcription regulation</keyword>
<reference key="1">
    <citation type="journal article" date="2001" name="Nature">
        <title>Genome sequence of enterohaemorrhagic Escherichia coli O157:H7.</title>
        <authorList>
            <person name="Perna N.T."/>
            <person name="Plunkett G. III"/>
            <person name="Burland V."/>
            <person name="Mau B."/>
            <person name="Glasner J.D."/>
            <person name="Rose D.J."/>
            <person name="Mayhew G.F."/>
            <person name="Evans P.S."/>
            <person name="Gregor J."/>
            <person name="Kirkpatrick H.A."/>
            <person name="Posfai G."/>
            <person name="Hackett J."/>
            <person name="Klink S."/>
            <person name="Boutin A."/>
            <person name="Shao Y."/>
            <person name="Miller L."/>
            <person name="Grotbeck E.J."/>
            <person name="Davis N.W."/>
            <person name="Lim A."/>
            <person name="Dimalanta E.T."/>
            <person name="Potamousis K."/>
            <person name="Apodaca J."/>
            <person name="Anantharaman T.S."/>
            <person name="Lin J."/>
            <person name="Yen G."/>
            <person name="Schwartz D.C."/>
            <person name="Welch R.A."/>
            <person name="Blattner F.R."/>
        </authorList>
    </citation>
    <scope>NUCLEOTIDE SEQUENCE [LARGE SCALE GENOMIC DNA]</scope>
    <source>
        <strain>O157:H7 / EDL933 / ATCC 700927 / EHEC</strain>
    </source>
</reference>
<reference key="2">
    <citation type="journal article" date="2001" name="DNA Res.">
        <title>Complete genome sequence of enterohemorrhagic Escherichia coli O157:H7 and genomic comparison with a laboratory strain K-12.</title>
        <authorList>
            <person name="Hayashi T."/>
            <person name="Makino K."/>
            <person name="Ohnishi M."/>
            <person name="Kurokawa K."/>
            <person name="Ishii K."/>
            <person name="Yokoyama K."/>
            <person name="Han C.-G."/>
            <person name="Ohtsubo E."/>
            <person name="Nakayama K."/>
            <person name="Murata T."/>
            <person name="Tanaka M."/>
            <person name="Tobe T."/>
            <person name="Iida T."/>
            <person name="Takami H."/>
            <person name="Honda T."/>
            <person name="Sasakawa C."/>
            <person name="Ogasawara N."/>
            <person name="Yasunaga T."/>
            <person name="Kuhara S."/>
            <person name="Shiba T."/>
            <person name="Hattori M."/>
            <person name="Shinagawa H."/>
        </authorList>
    </citation>
    <scope>NUCLEOTIDE SEQUENCE [LARGE SCALE GENOMIC DNA]</scope>
    <source>
        <strain>O157:H7 / Sakai / RIMD 0509952 / EHEC</strain>
    </source>
</reference>
<accession>P0ACK7</accession>
<accession>P06217</accession>